<proteinExistence type="evidence at protein level"/>
<feature type="chain" id="PRO_0000337681" description="Sodium-coupled monocarboxylate transporter 2">
    <location>
        <begin position="1"/>
        <end position="619"/>
    </location>
</feature>
<feature type="topological domain" description="Extracellular" evidence="2">
    <location>
        <begin position="1"/>
        <end position="9"/>
    </location>
</feature>
<feature type="transmembrane region" description="Helical" evidence="2">
    <location>
        <begin position="10"/>
        <end position="30"/>
    </location>
</feature>
<feature type="topological domain" description="Cytoplasmic" evidence="2">
    <location>
        <begin position="31"/>
        <end position="47"/>
    </location>
</feature>
<feature type="transmembrane region" description="Helical" evidence="2">
    <location>
        <begin position="48"/>
        <end position="68"/>
    </location>
</feature>
<feature type="topological domain" description="Extracellular" evidence="2">
    <location>
        <begin position="69"/>
        <end position="80"/>
    </location>
</feature>
<feature type="transmembrane region" description="Helical" evidence="2">
    <location>
        <begin position="81"/>
        <end position="101"/>
    </location>
</feature>
<feature type="topological domain" description="Cytoplasmic" evidence="2">
    <location>
        <begin position="102"/>
        <end position="128"/>
    </location>
</feature>
<feature type="transmembrane region" description="Helical" evidence="2">
    <location>
        <begin position="129"/>
        <end position="149"/>
    </location>
</feature>
<feature type="topological domain" description="Extracellular" evidence="2">
    <location>
        <begin position="150"/>
        <end position="157"/>
    </location>
</feature>
<feature type="transmembrane region" description="Helical" evidence="2">
    <location>
        <begin position="158"/>
        <end position="178"/>
    </location>
</feature>
<feature type="topological domain" description="Cytoplasmic" evidence="2">
    <location>
        <begin position="179"/>
        <end position="180"/>
    </location>
</feature>
<feature type="transmembrane region" description="Helical" evidence="2">
    <location>
        <begin position="181"/>
        <end position="201"/>
    </location>
</feature>
<feature type="topological domain" description="Extracellular" evidence="2">
    <location>
        <begin position="202"/>
        <end position="235"/>
    </location>
</feature>
<feature type="transmembrane region" description="Helical" evidence="2">
    <location>
        <begin position="236"/>
        <end position="256"/>
    </location>
</feature>
<feature type="topological domain" description="Cytoplasmic" evidence="2">
    <location>
        <begin position="257"/>
        <end position="275"/>
    </location>
</feature>
<feature type="transmembrane region" description="Helical" evidence="2">
    <location>
        <begin position="276"/>
        <end position="296"/>
    </location>
</feature>
<feature type="topological domain" description="Extracellular" evidence="2">
    <location>
        <begin position="297"/>
        <end position="321"/>
    </location>
</feature>
<feature type="transmembrane region" description="Helical" evidence="2">
    <location>
        <begin position="322"/>
        <end position="342"/>
    </location>
</feature>
<feature type="topological domain" description="Cytoplasmic" evidence="2">
    <location>
        <begin position="343"/>
        <end position="385"/>
    </location>
</feature>
<feature type="transmembrane region" description="Helical" evidence="2">
    <location>
        <begin position="386"/>
        <end position="406"/>
    </location>
</feature>
<feature type="topological domain" description="Extracellular" evidence="2">
    <location>
        <begin position="407"/>
        <end position="411"/>
    </location>
</feature>
<feature type="transmembrane region" description="Helical" evidence="2">
    <location>
        <begin position="412"/>
        <end position="432"/>
    </location>
</feature>
<feature type="topological domain" description="Cytoplasmic" evidence="2">
    <location>
        <begin position="433"/>
        <end position="437"/>
    </location>
</feature>
<feature type="transmembrane region" description="Helical" evidence="2">
    <location>
        <begin position="438"/>
        <end position="458"/>
    </location>
</feature>
<feature type="topological domain" description="Extracellular" evidence="2">
    <location>
        <begin position="459"/>
        <end position="504"/>
    </location>
</feature>
<feature type="transmembrane region" description="Helical" evidence="2">
    <location>
        <begin position="505"/>
        <end position="525"/>
    </location>
</feature>
<feature type="topological domain" description="Cytoplasmic" evidence="2">
    <location>
        <begin position="526"/>
        <end position="619"/>
    </location>
</feature>
<feature type="glycosylation site" description="N-linked (GlcNAc...) asparagine" evidence="2">
    <location>
        <position position="219"/>
    </location>
</feature>
<feature type="glycosylation site" description="N-linked (GlcNAc...) asparagine" evidence="2">
    <location>
        <position position="480"/>
    </location>
</feature>
<feature type="splice variant" id="VSP_033996" description="In isoform 2." evidence="7">
    <original>ALSIHGMCGGPMLGLFTLGLVFPFVNWK</original>
    <variation>PGIVSQERAITGSFQRNLASVCYGVSIWKLIM</variation>
    <location>
        <begin position="409"/>
        <end position="436"/>
    </location>
</feature>
<sequence length="619" mass="67951">MRVKNFEAWDYVVFAGLFVISSGIGVFFAIKERKKTTSREFLVGGRQMSFGPVALSLTASFMSAVTVLGTPAEVYRFGASFFLFLISYVFVVFFTSELFLPVFYRSGITSTYEYLQLRFNKPVRYAATIIYIVQTILYTGVVVYAPALALNQVTGFNLWASVFATGIVCTFYCSLGGLKAVVWTDAFQMVVMIVGFLTVLIQGSNHVGGFNNVLEKAGNGSRLHIVDFDVDPLRRHTFWTITIGGTFTWLGVYGVNQSTIQRCISCKTEKHAKLALYFNLLGLWIIVACAVFSGLIMYSHFKDCDPWTSGVISAPDQLMPYFVMEIFATMPGLPGLFVACAFSGTLSTVAASINALATVTFEDFVKSCFPHLSDKLSTWISKGLCILFGIMCTSMAVVASLMGSVVQAALSIHGMCGGPMLGLFTLGLVFPFVNWKGALGGLLTGITLSFWVAIGSFIYPAPESKTLPLPLSTEHCVELNITTTVAPQISSRPVLADTWYSLSYLYFSAVGCLGCIAAGIIISFLTGKQRGKDIDPLLIRPVCNLFCFWSKKYKTLCWCGVQHDRETEQDYLDSGSAWKQGVESGLQNGLKQDTLAQIPGYNPKEKSYSNSVPEKTTYF</sequence>
<accession>Q49B93</accession>
<accession>Q0D2G1</accession>
<accession>Q6A4K8</accession>
<reference key="1">
    <citation type="journal article" date="2005" name="Biochem. J.">
        <title>Cloning and functional identification of slc5a12 as a sodium-coupled low-affinity transporter for monocarboxylates (SMCT2).</title>
        <authorList>
            <person name="Srinivas S.R."/>
            <person name="Gopal E."/>
            <person name="Zhuang L."/>
            <person name="Itagaki S."/>
            <person name="Martin P.M."/>
            <person name="Fei Y.-J."/>
            <person name="Ganapathy V."/>
            <person name="Prasad P.D."/>
        </authorList>
    </citation>
    <scope>NUCLEOTIDE SEQUENCE [MRNA] (ISOFORM 1)</scope>
    <scope>FUNCTION</scope>
    <scope>STOICHIOMETRY</scope>
    <scope>TISSUE SPECIFICITY</scope>
    <scope>TRANSPORTER ACTIVITY</scope>
    <scope>BIOPHYSICOCHEMICAL PROPERTIES</scope>
    <source>
        <strain>C57BL/6J</strain>
        <tissue>Kidney</tissue>
    </source>
</reference>
<reference key="2">
    <citation type="submission" date="2002-07" db="EMBL/GenBank/DDBJ databases">
        <title>Sequence of a novel sodium solute cotransporter similar to the Na-iodide transporter.</title>
        <authorList>
            <person name="Mount D.B."/>
        </authorList>
    </citation>
    <scope>NUCLEOTIDE SEQUENCE [MRNA] (ISOFORM 2)</scope>
    <source>
        <strain>C57BL/6J</strain>
    </source>
</reference>
<reference key="3">
    <citation type="journal article" date="2005" name="Science">
        <title>The transcriptional landscape of the mammalian genome.</title>
        <authorList>
            <person name="Carninci P."/>
            <person name="Kasukawa T."/>
            <person name="Katayama S."/>
            <person name="Gough J."/>
            <person name="Frith M.C."/>
            <person name="Maeda N."/>
            <person name="Oyama R."/>
            <person name="Ravasi T."/>
            <person name="Lenhard B."/>
            <person name="Wells C."/>
            <person name="Kodzius R."/>
            <person name="Shimokawa K."/>
            <person name="Bajic V.B."/>
            <person name="Brenner S.E."/>
            <person name="Batalov S."/>
            <person name="Forrest A.R."/>
            <person name="Zavolan M."/>
            <person name="Davis M.J."/>
            <person name="Wilming L.G."/>
            <person name="Aidinis V."/>
            <person name="Allen J.E."/>
            <person name="Ambesi-Impiombato A."/>
            <person name="Apweiler R."/>
            <person name="Aturaliya R.N."/>
            <person name="Bailey T.L."/>
            <person name="Bansal M."/>
            <person name="Baxter L."/>
            <person name="Beisel K.W."/>
            <person name="Bersano T."/>
            <person name="Bono H."/>
            <person name="Chalk A.M."/>
            <person name="Chiu K.P."/>
            <person name="Choudhary V."/>
            <person name="Christoffels A."/>
            <person name="Clutterbuck D.R."/>
            <person name="Crowe M.L."/>
            <person name="Dalla E."/>
            <person name="Dalrymple B.P."/>
            <person name="de Bono B."/>
            <person name="Della Gatta G."/>
            <person name="di Bernardo D."/>
            <person name="Down T."/>
            <person name="Engstrom P."/>
            <person name="Fagiolini M."/>
            <person name="Faulkner G."/>
            <person name="Fletcher C.F."/>
            <person name="Fukushima T."/>
            <person name="Furuno M."/>
            <person name="Futaki S."/>
            <person name="Gariboldi M."/>
            <person name="Georgii-Hemming P."/>
            <person name="Gingeras T.R."/>
            <person name="Gojobori T."/>
            <person name="Green R.E."/>
            <person name="Gustincich S."/>
            <person name="Harbers M."/>
            <person name="Hayashi Y."/>
            <person name="Hensch T.K."/>
            <person name="Hirokawa N."/>
            <person name="Hill D."/>
            <person name="Huminiecki L."/>
            <person name="Iacono M."/>
            <person name="Ikeo K."/>
            <person name="Iwama A."/>
            <person name="Ishikawa T."/>
            <person name="Jakt M."/>
            <person name="Kanapin A."/>
            <person name="Katoh M."/>
            <person name="Kawasawa Y."/>
            <person name="Kelso J."/>
            <person name="Kitamura H."/>
            <person name="Kitano H."/>
            <person name="Kollias G."/>
            <person name="Krishnan S.P."/>
            <person name="Kruger A."/>
            <person name="Kummerfeld S.K."/>
            <person name="Kurochkin I.V."/>
            <person name="Lareau L.F."/>
            <person name="Lazarevic D."/>
            <person name="Lipovich L."/>
            <person name="Liu J."/>
            <person name="Liuni S."/>
            <person name="McWilliam S."/>
            <person name="Madan Babu M."/>
            <person name="Madera M."/>
            <person name="Marchionni L."/>
            <person name="Matsuda H."/>
            <person name="Matsuzawa S."/>
            <person name="Miki H."/>
            <person name="Mignone F."/>
            <person name="Miyake S."/>
            <person name="Morris K."/>
            <person name="Mottagui-Tabar S."/>
            <person name="Mulder N."/>
            <person name="Nakano N."/>
            <person name="Nakauchi H."/>
            <person name="Ng P."/>
            <person name="Nilsson R."/>
            <person name="Nishiguchi S."/>
            <person name="Nishikawa S."/>
            <person name="Nori F."/>
            <person name="Ohara O."/>
            <person name="Okazaki Y."/>
            <person name="Orlando V."/>
            <person name="Pang K.C."/>
            <person name="Pavan W.J."/>
            <person name="Pavesi G."/>
            <person name="Pesole G."/>
            <person name="Petrovsky N."/>
            <person name="Piazza S."/>
            <person name="Reed J."/>
            <person name="Reid J.F."/>
            <person name="Ring B.Z."/>
            <person name="Ringwald M."/>
            <person name="Rost B."/>
            <person name="Ruan Y."/>
            <person name="Salzberg S.L."/>
            <person name="Sandelin A."/>
            <person name="Schneider C."/>
            <person name="Schoenbach C."/>
            <person name="Sekiguchi K."/>
            <person name="Semple C.A."/>
            <person name="Seno S."/>
            <person name="Sessa L."/>
            <person name="Sheng Y."/>
            <person name="Shibata Y."/>
            <person name="Shimada H."/>
            <person name="Shimada K."/>
            <person name="Silva D."/>
            <person name="Sinclair B."/>
            <person name="Sperling S."/>
            <person name="Stupka E."/>
            <person name="Sugiura K."/>
            <person name="Sultana R."/>
            <person name="Takenaka Y."/>
            <person name="Taki K."/>
            <person name="Tammoja K."/>
            <person name="Tan S.L."/>
            <person name="Tang S."/>
            <person name="Taylor M.S."/>
            <person name="Tegner J."/>
            <person name="Teichmann S.A."/>
            <person name="Ueda H.R."/>
            <person name="van Nimwegen E."/>
            <person name="Verardo R."/>
            <person name="Wei C.L."/>
            <person name="Yagi K."/>
            <person name="Yamanishi H."/>
            <person name="Zabarovsky E."/>
            <person name="Zhu S."/>
            <person name="Zimmer A."/>
            <person name="Hide W."/>
            <person name="Bult C."/>
            <person name="Grimmond S.M."/>
            <person name="Teasdale R.D."/>
            <person name="Liu E.T."/>
            <person name="Brusic V."/>
            <person name="Quackenbush J."/>
            <person name="Wahlestedt C."/>
            <person name="Mattick J.S."/>
            <person name="Hume D.A."/>
            <person name="Kai C."/>
            <person name="Sasaki D."/>
            <person name="Tomaru Y."/>
            <person name="Fukuda S."/>
            <person name="Kanamori-Katayama M."/>
            <person name="Suzuki M."/>
            <person name="Aoki J."/>
            <person name="Arakawa T."/>
            <person name="Iida J."/>
            <person name="Imamura K."/>
            <person name="Itoh M."/>
            <person name="Kato T."/>
            <person name="Kawaji H."/>
            <person name="Kawagashira N."/>
            <person name="Kawashima T."/>
            <person name="Kojima M."/>
            <person name="Kondo S."/>
            <person name="Konno H."/>
            <person name="Nakano K."/>
            <person name="Ninomiya N."/>
            <person name="Nishio T."/>
            <person name="Okada M."/>
            <person name="Plessy C."/>
            <person name="Shibata K."/>
            <person name="Shiraki T."/>
            <person name="Suzuki S."/>
            <person name="Tagami M."/>
            <person name="Waki K."/>
            <person name="Watahiki A."/>
            <person name="Okamura-Oho Y."/>
            <person name="Suzuki H."/>
            <person name="Kawai J."/>
            <person name="Hayashizaki Y."/>
        </authorList>
    </citation>
    <scope>NUCLEOTIDE SEQUENCE [LARGE SCALE MRNA] (ISOFORM 1)</scope>
    <source>
        <strain>C57BL/6J</strain>
        <tissue>Kidney</tissue>
    </source>
</reference>
<reference key="4">
    <citation type="journal article" date="2009" name="PLoS Biol.">
        <title>Lineage-specific biology revealed by a finished genome assembly of the mouse.</title>
        <authorList>
            <person name="Church D.M."/>
            <person name="Goodstadt L."/>
            <person name="Hillier L.W."/>
            <person name="Zody M.C."/>
            <person name="Goldstein S."/>
            <person name="She X."/>
            <person name="Bult C.J."/>
            <person name="Agarwala R."/>
            <person name="Cherry J.L."/>
            <person name="DiCuccio M."/>
            <person name="Hlavina W."/>
            <person name="Kapustin Y."/>
            <person name="Meric P."/>
            <person name="Maglott D."/>
            <person name="Birtle Z."/>
            <person name="Marques A.C."/>
            <person name="Graves T."/>
            <person name="Zhou S."/>
            <person name="Teague B."/>
            <person name="Potamousis K."/>
            <person name="Churas C."/>
            <person name="Place M."/>
            <person name="Herschleb J."/>
            <person name="Runnheim R."/>
            <person name="Forrest D."/>
            <person name="Amos-Landgraf J."/>
            <person name="Schwartz D.C."/>
            <person name="Cheng Z."/>
            <person name="Lindblad-Toh K."/>
            <person name="Eichler E.E."/>
            <person name="Ponting C.P."/>
        </authorList>
    </citation>
    <scope>NUCLEOTIDE SEQUENCE [LARGE SCALE GENOMIC DNA]</scope>
    <source>
        <strain>C57BL/6J</strain>
    </source>
</reference>
<reference key="5">
    <citation type="journal article" date="2004" name="Genome Res.">
        <title>The status, quality, and expansion of the NIH full-length cDNA project: the Mammalian Gene Collection (MGC).</title>
        <authorList>
            <consortium name="The MGC Project Team"/>
        </authorList>
    </citation>
    <scope>NUCLEOTIDE SEQUENCE [LARGE SCALE MRNA] OF 2-619 (ISOFORM 1)</scope>
</reference>
<reference key="6">
    <citation type="journal article" date="2006" name="J. Biol. Chem.">
        <title>c/ebpdelta null mouse as a model for the double knock-out of slc5a8 and slc5a12 in kidney.</title>
        <authorList>
            <person name="Thangaraju M."/>
            <person name="Ananth S."/>
            <person name="Martin P.M."/>
            <person name="Roon P."/>
            <person name="Smith S.B."/>
            <person name="Sterneck E."/>
            <person name="Prasad P.D."/>
            <person name="Ganapathy V."/>
        </authorList>
    </citation>
    <scope>FUNCTION</scope>
    <scope>SUBCELLULAR LOCATION</scope>
    <scope>INDUCTION</scope>
    <scope>TISSUE SPECIFICITY</scope>
</reference>
<reference key="7">
    <citation type="journal article" date="2007" name="Biochim. Biophys. Acta">
        <title>Cloning and functional characterization of human SMCT2 (SLC5A12) and expression pattern of the transporter in kidney.</title>
        <authorList>
            <person name="Gopal E."/>
            <person name="Umapathy N.S."/>
            <person name="Martin P.M."/>
            <person name="Ananth S."/>
            <person name="Gnana-Prakasam J.P."/>
            <person name="Becker H."/>
            <person name="Wagner C.A."/>
            <person name="Ganapathy V."/>
            <person name="Prasad P.D."/>
        </authorList>
    </citation>
    <scope>SUBCELLULAR LOCATION</scope>
    <scope>TISSUE SPECIFICITY</scope>
</reference>
<reference key="8">
    <citation type="journal article" date="2007" name="Invest. Ophthalmol. Vis. Sci.">
        <title>Expression of the sodium-coupled monocarboxylate transporters SMCT1 (SLC5A8) and SMCT2 (SLC5A12) in retina.</title>
        <authorList>
            <person name="Martin P.M."/>
            <person name="Dun Y."/>
            <person name="Mysona B."/>
            <person name="Ananth S."/>
            <person name="Roon P."/>
            <person name="Smith S.B."/>
            <person name="Ganapathy V."/>
        </authorList>
    </citation>
    <scope>POSSIBLE FUNCTION</scope>
    <scope>TISSUE SPECIFICITY</scope>
</reference>
<reference key="9">
    <citation type="journal article" date="2010" name="Cell">
        <title>A tissue-specific atlas of mouse protein phosphorylation and expression.</title>
        <authorList>
            <person name="Huttlin E.L."/>
            <person name="Jedrychowski M.P."/>
            <person name="Elias J.E."/>
            <person name="Goswami T."/>
            <person name="Rad R."/>
            <person name="Beausoleil S.A."/>
            <person name="Villen J."/>
            <person name="Haas W."/>
            <person name="Sowa M.E."/>
            <person name="Gygi S.P."/>
        </authorList>
    </citation>
    <scope>IDENTIFICATION BY MASS SPECTROMETRY [LARGE SCALE ANALYSIS]</scope>
    <source>
        <tissue>Kidney</tissue>
    </source>
</reference>
<evidence type="ECO:0000250" key="1">
    <source>
        <dbReference type="UniProtKB" id="Q7T384"/>
    </source>
</evidence>
<evidence type="ECO:0000255" key="2"/>
<evidence type="ECO:0000269" key="3">
    <source>
    </source>
</evidence>
<evidence type="ECO:0000269" key="4">
    <source>
    </source>
</evidence>
<evidence type="ECO:0000269" key="5">
    <source>
    </source>
</evidence>
<evidence type="ECO:0000269" key="6">
    <source>
    </source>
</evidence>
<evidence type="ECO:0000303" key="7">
    <source ref="2"/>
</evidence>
<evidence type="ECO:0000305" key="8"/>
<evidence type="ECO:0000305" key="9">
    <source>
    </source>
</evidence>
<keyword id="KW-0025">Alternative splicing</keyword>
<keyword id="KW-1003">Cell membrane</keyword>
<keyword id="KW-0325">Glycoprotein</keyword>
<keyword id="KW-0406">Ion transport</keyword>
<keyword id="KW-0472">Membrane</keyword>
<keyword id="KW-1185">Reference proteome</keyword>
<keyword id="KW-0915">Sodium</keyword>
<keyword id="KW-0739">Sodium transport</keyword>
<keyword id="KW-0769">Symport</keyword>
<keyword id="KW-0812">Transmembrane</keyword>
<keyword id="KW-1133">Transmembrane helix</keyword>
<keyword id="KW-0813">Transport</keyword>
<protein>
    <recommendedName>
        <fullName>Sodium-coupled monocarboxylate transporter 2</fullName>
    </recommendedName>
    <alternativeName>
        <fullName>Electroneutral sodium monocarboxylate cotransporter</fullName>
    </alternativeName>
    <alternativeName>
        <fullName>Low-affinity sodium-lactate cotransporter</fullName>
    </alternativeName>
    <alternativeName>
        <fullName>Solute carrier family 5 member 12</fullName>
    </alternativeName>
</protein>
<name>SC5AC_MOUSE</name>
<gene>
    <name type="primary">Slc5a12</name>
    <name type="synonym">Smct2</name>
</gene>
<comment type="function">
    <text evidence="3 4">Acts as an electroneutral and low-affinity sodium (Na(+))-dependent sodium-coupled solute transporter. Catalyzes the transport across the plasma membrane of many monocarboxylates such as lactate, pyruvate, nicotinate, propionate, butyrate and beta-D-hydroxybutyrate. May be responsible for the first step of reabsorption of monocarboxylates from the lumen of the proximal tubule of the kidney and the small intestine. May play also a role in monocarboxylates transport in the retina. Mediates electroneutral uptake of lactate, with a stoichiometry of 2 Na(+) for each lactate.</text>
</comment>
<comment type="catalytic activity">
    <reaction evidence="9">
        <text>(S)-lactate(out) + Na(+)(out) = (S)-lactate(in) + Na(+)(in)</text>
        <dbReference type="Rhea" id="RHEA:75791"/>
        <dbReference type="ChEBI" id="CHEBI:16651"/>
        <dbReference type="ChEBI" id="CHEBI:29101"/>
    </reaction>
</comment>
<comment type="catalytic activity">
    <reaction evidence="9">
        <text>nicotinate(out) + Na(+)(out) = nicotinate(in) + Na(+)(in)</text>
        <dbReference type="Rhea" id="RHEA:75795"/>
        <dbReference type="ChEBI" id="CHEBI:29101"/>
        <dbReference type="ChEBI" id="CHEBI:32544"/>
    </reaction>
</comment>
<comment type="catalytic activity">
    <reaction evidence="1">
        <text>pyruvate(out) + Na(+)(out) = pyruvate(in) + Na(+)(in)</text>
        <dbReference type="Rhea" id="RHEA:75799"/>
        <dbReference type="ChEBI" id="CHEBI:15361"/>
        <dbReference type="ChEBI" id="CHEBI:29101"/>
    </reaction>
</comment>
<comment type="catalytic activity">
    <reaction evidence="1">
        <text>propanoate(out) + Na(+)(out) = propanoate(in) + Na(+)(in)</text>
        <dbReference type="Rhea" id="RHEA:75807"/>
        <dbReference type="ChEBI" id="CHEBI:17272"/>
        <dbReference type="ChEBI" id="CHEBI:29101"/>
    </reaction>
</comment>
<comment type="catalytic activity">
    <reaction evidence="1">
        <text>butanoate(out) + Na(+)(out) = butanoate(in) + Na(+)(in)</text>
        <dbReference type="Rhea" id="RHEA:75803"/>
        <dbReference type="ChEBI" id="CHEBI:17968"/>
        <dbReference type="ChEBI" id="CHEBI:29101"/>
    </reaction>
</comment>
<comment type="catalytic activity">
    <reaction evidence="1">
        <text>acetoacetate(out) + Na(+)(out) = acetoacetate(in) + Na(+)(in)</text>
        <dbReference type="Rhea" id="RHEA:75811"/>
        <dbReference type="ChEBI" id="CHEBI:13705"/>
        <dbReference type="ChEBI" id="CHEBI:29101"/>
    </reaction>
</comment>
<comment type="biophysicochemical properties">
    <kinetics>
        <KM evidence="3">35 mM for lactate</KM>
    </kinetics>
</comment>
<comment type="subcellular location">
    <subcellularLocation>
        <location evidence="4 6">Apical cell membrane</location>
        <topology evidence="4 6">Multi-pass membrane protein</topology>
    </subcellularLocation>
    <text evidence="4 6">Detected at the brush border membrane of the kidney. Colocalizes with vimentin in Mueller cells.</text>
</comment>
<comment type="alternative products">
    <event type="alternative splicing"/>
    <isoform>
        <id>Q49B93-1</id>
        <name>1</name>
        <sequence type="displayed"/>
    </isoform>
    <isoform>
        <id>Q49B93-2</id>
        <name>2</name>
        <sequence type="described" ref="VSP_033996"/>
    </isoform>
</comment>
<comment type="tissue specificity">
    <text evidence="3 4 5 6">Expressed in the cortical region of the kidney corresponding to the proximal tubule. Expressed in Mueller cells of the inner retina (at protein level). Isoform 1 is expressed in the retina, kidney, small intestine and skeletal muscle. Isoform 2 is not detected in the kidney, small intestine and skeletal muscle. In the kidney, expressed predominantly in tubular epithelial cells of the cortical region and in the convoluted portions of the proximal tubule (pars convoluta). In the small intestine, its expression is highest in the proximal part and gradually decreased towards the distal end. Expressed in the neural retina. Not detected in the caecum and colon.</text>
</comment>
<comment type="induction">
    <text evidence="4">Up-regulated by CEBPD.</text>
</comment>
<comment type="similarity">
    <text evidence="8">Belongs to the sodium:solute symporter (SSF) (TC 2.A.21) family.</text>
</comment>
<dbReference type="EMBL" id="AY964639">
    <property type="protein sequence ID" value="AAY32930.1"/>
    <property type="molecule type" value="mRNA"/>
</dbReference>
<dbReference type="EMBL" id="AF529222">
    <property type="protein sequence ID" value="AAQ09530.1"/>
    <property type="molecule type" value="mRNA"/>
</dbReference>
<dbReference type="EMBL" id="AK144004">
    <property type="protein sequence ID" value="BAE25658.1"/>
    <property type="molecule type" value="mRNA"/>
</dbReference>
<dbReference type="EMBL" id="AK165419">
    <property type="protein sequence ID" value="BAE38174.1"/>
    <property type="molecule type" value="mRNA"/>
</dbReference>
<dbReference type="EMBL" id="AL732495">
    <property type="status" value="NOT_ANNOTATED_CDS"/>
    <property type="molecule type" value="Genomic_DNA"/>
</dbReference>
<dbReference type="EMBL" id="BX005257">
    <property type="status" value="NOT_ANNOTATED_CDS"/>
    <property type="molecule type" value="Genomic_DNA"/>
</dbReference>
<dbReference type="EMBL" id="BC121791">
    <property type="protein sequence ID" value="AAI21792.1"/>
    <property type="molecule type" value="mRNA"/>
</dbReference>
<dbReference type="CCDS" id="CCDS16512.1">
    <molecule id="Q49B93-2"/>
</dbReference>
<dbReference type="CCDS" id="CCDS50656.1">
    <molecule id="Q49B93-1"/>
</dbReference>
<dbReference type="RefSeq" id="NP_001003915.1">
    <molecule id="Q49B93-2"/>
    <property type="nucleotide sequence ID" value="NM_001003915.2"/>
</dbReference>
<dbReference type="RefSeq" id="NP_001171095.1">
    <molecule id="Q49B93-1"/>
    <property type="nucleotide sequence ID" value="NM_001177624.1"/>
</dbReference>
<dbReference type="SMR" id="Q49B93"/>
<dbReference type="FunCoup" id="Q49B93">
    <property type="interactions" value="107"/>
</dbReference>
<dbReference type="STRING" id="10090.ENSMUSP00000047340"/>
<dbReference type="GlyCosmos" id="Q49B93">
    <property type="glycosylation" value="2 sites, No reported glycans"/>
</dbReference>
<dbReference type="GlyGen" id="Q49B93">
    <property type="glycosylation" value="2 sites"/>
</dbReference>
<dbReference type="iPTMnet" id="Q49B93"/>
<dbReference type="PhosphoSitePlus" id="Q49B93"/>
<dbReference type="jPOST" id="Q49B93"/>
<dbReference type="PaxDb" id="10090-ENSMUSP00000047340"/>
<dbReference type="ProteomicsDB" id="256607">
    <molecule id="Q49B93-1"/>
</dbReference>
<dbReference type="ProteomicsDB" id="256608">
    <molecule id="Q49B93-2"/>
</dbReference>
<dbReference type="Antibodypedia" id="48784">
    <property type="antibodies" value="23 antibodies from 16 providers"/>
</dbReference>
<dbReference type="DNASU" id="241612"/>
<dbReference type="Ensembl" id="ENSMUST00000045972.13">
    <molecule id="Q49B93-2"/>
    <property type="protein sequence ID" value="ENSMUSP00000047340.7"/>
    <property type="gene ID" value="ENSMUSG00000041644.15"/>
</dbReference>
<dbReference type="Ensembl" id="ENSMUST00000111026.3">
    <molecule id="Q49B93-1"/>
    <property type="protein sequence ID" value="ENSMUSP00000106655.3"/>
    <property type="gene ID" value="ENSMUSG00000041644.15"/>
</dbReference>
<dbReference type="GeneID" id="241612"/>
<dbReference type="KEGG" id="mmu:241612"/>
<dbReference type="UCSC" id="uc008lmw.2">
    <molecule id="Q49B93-2"/>
    <property type="organism name" value="mouse"/>
</dbReference>
<dbReference type="UCSC" id="uc008lmx.2">
    <molecule id="Q49B93-1"/>
    <property type="organism name" value="mouse"/>
</dbReference>
<dbReference type="AGR" id="MGI:2138890"/>
<dbReference type="CTD" id="159963"/>
<dbReference type="MGI" id="MGI:2138890">
    <property type="gene designation" value="Slc5a12"/>
</dbReference>
<dbReference type="VEuPathDB" id="HostDB:ENSMUSG00000041644"/>
<dbReference type="eggNOG" id="KOG2349">
    <property type="taxonomic scope" value="Eukaryota"/>
</dbReference>
<dbReference type="GeneTree" id="ENSGT00940000159545"/>
<dbReference type="HOGENOM" id="CLU_018808_11_1_1"/>
<dbReference type="InParanoid" id="Q49B93"/>
<dbReference type="OMA" id="QMVVMFV"/>
<dbReference type="OrthoDB" id="6358884at2759"/>
<dbReference type="PhylomeDB" id="Q49B93"/>
<dbReference type="TreeFam" id="TF316728"/>
<dbReference type="Reactome" id="R-MMU-427601">
    <property type="pathway name" value="Multifunctional anion exchangers"/>
</dbReference>
<dbReference type="BioGRID-ORCS" id="241612">
    <property type="hits" value="1 hit in 80 CRISPR screens"/>
</dbReference>
<dbReference type="ChiTaRS" id="Slc5a12">
    <property type="organism name" value="mouse"/>
</dbReference>
<dbReference type="PRO" id="PR:Q49B93"/>
<dbReference type="Proteomes" id="UP000000589">
    <property type="component" value="Chromosome 2"/>
</dbReference>
<dbReference type="RNAct" id="Q49B93">
    <property type="molecule type" value="protein"/>
</dbReference>
<dbReference type="Bgee" id="ENSMUSG00000041644">
    <property type="expression patterns" value="Expressed in adult mammalian kidney and 29 other cell types or tissues"/>
</dbReference>
<dbReference type="ExpressionAtlas" id="Q49B93">
    <property type="expression patterns" value="baseline and differential"/>
</dbReference>
<dbReference type="GO" id="GO:0016324">
    <property type="term" value="C:apical plasma membrane"/>
    <property type="evidence" value="ECO:0000250"/>
    <property type="project" value="UniProtKB"/>
</dbReference>
<dbReference type="GO" id="GO:0005654">
    <property type="term" value="C:nucleoplasm"/>
    <property type="evidence" value="ECO:0007669"/>
    <property type="project" value="Ensembl"/>
</dbReference>
<dbReference type="GO" id="GO:0015129">
    <property type="term" value="F:lactate transmembrane transporter activity"/>
    <property type="evidence" value="ECO:0000314"/>
    <property type="project" value="CACAO"/>
</dbReference>
<dbReference type="GO" id="GO:0140161">
    <property type="term" value="F:monocarboxylate:sodium symporter activity"/>
    <property type="evidence" value="ECO:0000250"/>
    <property type="project" value="UniProtKB"/>
</dbReference>
<dbReference type="CDD" id="cd11520">
    <property type="entry name" value="SLC5sbd_SMCT2"/>
    <property type="match status" value="1"/>
</dbReference>
<dbReference type="FunFam" id="1.20.1730.10:FF:000007">
    <property type="entry name" value="Sodium-coupled monocarboxylate transporter 2"/>
    <property type="match status" value="1"/>
</dbReference>
<dbReference type="Gene3D" id="1.20.1730.10">
    <property type="entry name" value="Sodium/glucose cotransporter"/>
    <property type="match status" value="1"/>
</dbReference>
<dbReference type="InterPro" id="IPR038377">
    <property type="entry name" value="Na/Glc_symporter_sf"/>
</dbReference>
<dbReference type="InterPro" id="IPR001734">
    <property type="entry name" value="Na/solute_symporter"/>
</dbReference>
<dbReference type="InterPro" id="IPR042700">
    <property type="entry name" value="SMCT2_SLC5sbd"/>
</dbReference>
<dbReference type="InterPro" id="IPR051163">
    <property type="entry name" value="Sodium:Solute_Symporter_SSF"/>
</dbReference>
<dbReference type="NCBIfam" id="TIGR00813">
    <property type="entry name" value="sss"/>
    <property type="match status" value="1"/>
</dbReference>
<dbReference type="PANTHER" id="PTHR42985">
    <property type="entry name" value="SODIUM-COUPLED MONOCARBOXYLATE TRANSPORTER"/>
    <property type="match status" value="1"/>
</dbReference>
<dbReference type="PANTHER" id="PTHR42985:SF15">
    <property type="entry name" value="SODIUM-COUPLED MONOCARBOXYLATE TRANSPORTER 2"/>
    <property type="match status" value="1"/>
</dbReference>
<dbReference type="Pfam" id="PF00474">
    <property type="entry name" value="SSF"/>
    <property type="match status" value="1"/>
</dbReference>
<dbReference type="PROSITE" id="PS50283">
    <property type="entry name" value="NA_SOLUT_SYMP_3"/>
    <property type="match status" value="1"/>
</dbReference>
<organism>
    <name type="scientific">Mus musculus</name>
    <name type="common">Mouse</name>
    <dbReference type="NCBI Taxonomy" id="10090"/>
    <lineage>
        <taxon>Eukaryota</taxon>
        <taxon>Metazoa</taxon>
        <taxon>Chordata</taxon>
        <taxon>Craniata</taxon>
        <taxon>Vertebrata</taxon>
        <taxon>Euteleostomi</taxon>
        <taxon>Mammalia</taxon>
        <taxon>Eutheria</taxon>
        <taxon>Euarchontoglires</taxon>
        <taxon>Glires</taxon>
        <taxon>Rodentia</taxon>
        <taxon>Myomorpha</taxon>
        <taxon>Muroidea</taxon>
        <taxon>Muridae</taxon>
        <taxon>Murinae</taxon>
        <taxon>Mus</taxon>
        <taxon>Mus</taxon>
    </lineage>
</organism>